<reference key="1">
    <citation type="journal article" date="2003" name="Science">
        <title>Role of mobile DNA in the evolution of vancomycin-resistant Enterococcus faecalis.</title>
        <authorList>
            <person name="Paulsen I.T."/>
            <person name="Banerjei L."/>
            <person name="Myers G.S.A."/>
            <person name="Nelson K.E."/>
            <person name="Seshadri R."/>
            <person name="Read T.D."/>
            <person name="Fouts D.E."/>
            <person name="Eisen J.A."/>
            <person name="Gill S.R."/>
            <person name="Heidelberg J.F."/>
            <person name="Tettelin H."/>
            <person name="Dodson R.J."/>
            <person name="Umayam L.A."/>
            <person name="Brinkac L.M."/>
            <person name="Beanan M.J."/>
            <person name="Daugherty S.C."/>
            <person name="DeBoy R.T."/>
            <person name="Durkin S.A."/>
            <person name="Kolonay J.F."/>
            <person name="Madupu R."/>
            <person name="Nelson W.C."/>
            <person name="Vamathevan J.J."/>
            <person name="Tran B."/>
            <person name="Upton J."/>
            <person name="Hansen T."/>
            <person name="Shetty J."/>
            <person name="Khouri H.M."/>
            <person name="Utterback T.R."/>
            <person name="Radune D."/>
            <person name="Ketchum K.A."/>
            <person name="Dougherty B.A."/>
            <person name="Fraser C.M."/>
        </authorList>
    </citation>
    <scope>NUCLEOTIDE SEQUENCE [LARGE SCALE GENOMIC DNA]</scope>
    <source>
        <strain>ATCC 700802 / V583</strain>
    </source>
</reference>
<gene>
    <name evidence="1" type="primary">pgi</name>
    <name type="ordered locus">EF_1416</name>
</gene>
<keyword id="KW-0963">Cytoplasm</keyword>
<keyword id="KW-0312">Gluconeogenesis</keyword>
<keyword id="KW-0324">Glycolysis</keyword>
<keyword id="KW-0413">Isomerase</keyword>
<keyword id="KW-1185">Reference proteome</keyword>
<sequence length="449" mass="49734">MSHIQLDYSKLAPFVADHELEYMQTQVTAVDKALREGTGAGNDFTGWIDLPENYDKEEFARIKKAAAKIQSDSEVLVVIGIGGSYLGARAAIEFLTHSFNNLLSKEERKAPQIFFAGNSISSTYLADLINVIGDRDFSVNVISKSGTTTEPAIAFRVFKELLINKYGKEEANKRIYATTDRAKGAVKVEADAEGWETFVIPDDVGGRFTVLTPVGLLPIAVSGADIDRLMEGANDARKEYGATSDLKENQAYQYAALRNILYRKGKTTEMLINYEPGMHYFSEWWKQLYGESEGKDGKGIFPAAADFSTDLHSMGQYVQEGMRNLFETVVKIENPRHSISIPEQNEDLDGLGYLQGKEIDFVNTKAFEGTLLAHTDGGVPNMIVKVPTMDAYSLGYVMYFFEIAVGISGYLNGVNPFDQPGVEAYKRNMFALLGKPGFEELAKDLNARL</sequence>
<accession>Q835G1</accession>
<evidence type="ECO:0000255" key="1">
    <source>
        <dbReference type="HAMAP-Rule" id="MF_00473"/>
    </source>
</evidence>
<protein>
    <recommendedName>
        <fullName evidence="1">Glucose-6-phosphate isomerase</fullName>
        <shortName evidence="1">GPI</shortName>
        <ecNumber evidence="1">5.3.1.9</ecNumber>
    </recommendedName>
    <alternativeName>
        <fullName evidence="1">Phosphoglucose isomerase</fullName>
        <shortName evidence="1">PGI</shortName>
    </alternativeName>
    <alternativeName>
        <fullName evidence="1">Phosphohexose isomerase</fullName>
        <shortName evidence="1">PHI</shortName>
    </alternativeName>
</protein>
<organism>
    <name type="scientific">Enterococcus faecalis (strain ATCC 700802 / V583)</name>
    <dbReference type="NCBI Taxonomy" id="226185"/>
    <lineage>
        <taxon>Bacteria</taxon>
        <taxon>Bacillati</taxon>
        <taxon>Bacillota</taxon>
        <taxon>Bacilli</taxon>
        <taxon>Lactobacillales</taxon>
        <taxon>Enterococcaceae</taxon>
        <taxon>Enterococcus</taxon>
    </lineage>
</organism>
<feature type="chain" id="PRO_0000180639" description="Glucose-6-phosphate isomerase">
    <location>
        <begin position="1"/>
        <end position="449"/>
    </location>
</feature>
<feature type="active site" description="Proton donor" evidence="1">
    <location>
        <position position="291"/>
    </location>
</feature>
<feature type="active site" evidence="1">
    <location>
        <position position="312"/>
    </location>
</feature>
<feature type="active site" evidence="1">
    <location>
        <position position="426"/>
    </location>
</feature>
<proteinExistence type="inferred from homology"/>
<dbReference type="EC" id="5.3.1.9" evidence="1"/>
<dbReference type="EMBL" id="AE016830">
    <property type="protein sequence ID" value="AAO81207.1"/>
    <property type="molecule type" value="Genomic_DNA"/>
</dbReference>
<dbReference type="RefSeq" id="NP_815137.1">
    <property type="nucleotide sequence ID" value="NC_004668.1"/>
</dbReference>
<dbReference type="RefSeq" id="WP_002357685.1">
    <property type="nucleotide sequence ID" value="NZ_KE136528.1"/>
</dbReference>
<dbReference type="SMR" id="Q835G1"/>
<dbReference type="STRING" id="226185.EF_1416"/>
<dbReference type="EnsemblBacteria" id="AAO81207">
    <property type="protein sequence ID" value="AAO81207"/>
    <property type="gene ID" value="EF_1416"/>
</dbReference>
<dbReference type="KEGG" id="efa:EF1416"/>
<dbReference type="PATRIC" id="fig|226185.45.peg.2085"/>
<dbReference type="eggNOG" id="COG0166">
    <property type="taxonomic scope" value="Bacteria"/>
</dbReference>
<dbReference type="HOGENOM" id="CLU_037303_0_1_9"/>
<dbReference type="UniPathway" id="UPA00109">
    <property type="reaction ID" value="UER00181"/>
</dbReference>
<dbReference type="UniPathway" id="UPA00138"/>
<dbReference type="Proteomes" id="UP000001415">
    <property type="component" value="Chromosome"/>
</dbReference>
<dbReference type="GO" id="GO:0005829">
    <property type="term" value="C:cytosol"/>
    <property type="evidence" value="ECO:0007669"/>
    <property type="project" value="TreeGrafter"/>
</dbReference>
<dbReference type="GO" id="GO:0097367">
    <property type="term" value="F:carbohydrate derivative binding"/>
    <property type="evidence" value="ECO:0007669"/>
    <property type="project" value="InterPro"/>
</dbReference>
<dbReference type="GO" id="GO:0004347">
    <property type="term" value="F:glucose-6-phosphate isomerase activity"/>
    <property type="evidence" value="ECO:0007669"/>
    <property type="project" value="UniProtKB-UniRule"/>
</dbReference>
<dbReference type="GO" id="GO:0048029">
    <property type="term" value="F:monosaccharide binding"/>
    <property type="evidence" value="ECO:0007669"/>
    <property type="project" value="TreeGrafter"/>
</dbReference>
<dbReference type="GO" id="GO:0006094">
    <property type="term" value="P:gluconeogenesis"/>
    <property type="evidence" value="ECO:0007669"/>
    <property type="project" value="UniProtKB-UniRule"/>
</dbReference>
<dbReference type="GO" id="GO:0051156">
    <property type="term" value="P:glucose 6-phosphate metabolic process"/>
    <property type="evidence" value="ECO:0007669"/>
    <property type="project" value="TreeGrafter"/>
</dbReference>
<dbReference type="GO" id="GO:0006096">
    <property type="term" value="P:glycolytic process"/>
    <property type="evidence" value="ECO:0007669"/>
    <property type="project" value="UniProtKB-UniRule"/>
</dbReference>
<dbReference type="CDD" id="cd05015">
    <property type="entry name" value="SIS_PGI_1"/>
    <property type="match status" value="1"/>
</dbReference>
<dbReference type="CDD" id="cd05016">
    <property type="entry name" value="SIS_PGI_2"/>
    <property type="match status" value="1"/>
</dbReference>
<dbReference type="FunFam" id="3.40.50.10490:FF:000015">
    <property type="entry name" value="Glucose-6-phosphate isomerase"/>
    <property type="match status" value="1"/>
</dbReference>
<dbReference type="FunFam" id="3.40.50.10490:FF:000016">
    <property type="entry name" value="Glucose-6-phosphate isomerase"/>
    <property type="match status" value="1"/>
</dbReference>
<dbReference type="Gene3D" id="3.40.50.10490">
    <property type="entry name" value="Glucose-6-phosphate isomerase like protein, domain 1"/>
    <property type="match status" value="2"/>
</dbReference>
<dbReference type="HAMAP" id="MF_00473">
    <property type="entry name" value="G6P_isomerase"/>
    <property type="match status" value="1"/>
</dbReference>
<dbReference type="InterPro" id="IPR001672">
    <property type="entry name" value="G6P_Isomerase"/>
</dbReference>
<dbReference type="InterPro" id="IPR018189">
    <property type="entry name" value="Phosphoglucose_isomerase_CS"/>
</dbReference>
<dbReference type="InterPro" id="IPR046348">
    <property type="entry name" value="SIS_dom_sf"/>
</dbReference>
<dbReference type="InterPro" id="IPR035476">
    <property type="entry name" value="SIS_PGI_1"/>
</dbReference>
<dbReference type="InterPro" id="IPR035482">
    <property type="entry name" value="SIS_PGI_2"/>
</dbReference>
<dbReference type="NCBIfam" id="NF010697">
    <property type="entry name" value="PRK14097.1"/>
    <property type="match status" value="1"/>
</dbReference>
<dbReference type="PANTHER" id="PTHR11469">
    <property type="entry name" value="GLUCOSE-6-PHOSPHATE ISOMERASE"/>
    <property type="match status" value="1"/>
</dbReference>
<dbReference type="PANTHER" id="PTHR11469:SF1">
    <property type="entry name" value="GLUCOSE-6-PHOSPHATE ISOMERASE"/>
    <property type="match status" value="1"/>
</dbReference>
<dbReference type="Pfam" id="PF00342">
    <property type="entry name" value="PGI"/>
    <property type="match status" value="1"/>
</dbReference>
<dbReference type="PRINTS" id="PR00662">
    <property type="entry name" value="G6PISOMERASE"/>
</dbReference>
<dbReference type="SUPFAM" id="SSF53697">
    <property type="entry name" value="SIS domain"/>
    <property type="match status" value="1"/>
</dbReference>
<dbReference type="PROSITE" id="PS00765">
    <property type="entry name" value="P_GLUCOSE_ISOMERASE_1"/>
    <property type="match status" value="1"/>
</dbReference>
<dbReference type="PROSITE" id="PS00174">
    <property type="entry name" value="P_GLUCOSE_ISOMERASE_2"/>
    <property type="match status" value="1"/>
</dbReference>
<dbReference type="PROSITE" id="PS51463">
    <property type="entry name" value="P_GLUCOSE_ISOMERASE_3"/>
    <property type="match status" value="1"/>
</dbReference>
<comment type="function">
    <text evidence="1">Catalyzes the reversible isomerization of glucose-6-phosphate to fructose-6-phosphate.</text>
</comment>
<comment type="catalytic activity">
    <reaction evidence="1">
        <text>alpha-D-glucose 6-phosphate = beta-D-fructose 6-phosphate</text>
        <dbReference type="Rhea" id="RHEA:11816"/>
        <dbReference type="ChEBI" id="CHEBI:57634"/>
        <dbReference type="ChEBI" id="CHEBI:58225"/>
        <dbReference type="EC" id="5.3.1.9"/>
    </reaction>
</comment>
<comment type="pathway">
    <text evidence="1">Carbohydrate biosynthesis; gluconeogenesis.</text>
</comment>
<comment type="pathway">
    <text evidence="1">Carbohydrate degradation; glycolysis; D-glyceraldehyde 3-phosphate and glycerone phosphate from D-glucose: step 2/4.</text>
</comment>
<comment type="subcellular location">
    <subcellularLocation>
        <location evidence="1">Cytoplasm</location>
    </subcellularLocation>
</comment>
<comment type="similarity">
    <text evidence="1">Belongs to the GPI family.</text>
</comment>
<name>G6PI_ENTFA</name>